<sequence length="540" mass="61152">MLFCDDSKKYLKEQNINLKNEFDKDDKRVEKFSLKHQNIYFDYSKNLINDYILKSLLESAEKSSLKDKIKQMFNGAKINSTEHRAVLHTALRDLSSTPLIVDGQDIRQEVTKEKQRVKELVEKVVSGRWRGFSGKKITDIVNIGIGGSDLGPKMVVRALQPYHCTDLKVHFVSNVDADSLLQALHVVDPETTLFIIASKSFSTEETLLNSISAREWLLDHYEDEKAVANHFVAISSKLDKVKEFGIDLEHCYKMWDWVGGRYSLWSSIGMSIAFAIGYDNFEKLLAGAYSVDKHFKETEFSKNIPVIMALLASYYSCTYNSQSQALLPYDERLCYFVDYLQQADMESNGKSVNIAGETVNYQTGVVLWGGVGTNGQHAFHQLLHQGNIFIPVDFIAIATSHHNYDNHQQALLANCFAQSQALMFGQSYDMVYNELLKSGLNETQAKELAAHKVIPGNRPSTTILLDELSPYSLGALIALYEHKIFVQGVLWDINSYDQWGVELGKKLGKNILKAMNDDSSDEYQNLDDSTRQLIAKVKNK</sequence>
<dbReference type="EC" id="5.3.1.9" evidence="1"/>
<dbReference type="EMBL" id="AJ749949">
    <property type="protein sequence ID" value="CAG45948.1"/>
    <property type="molecule type" value="Genomic_DNA"/>
</dbReference>
<dbReference type="RefSeq" id="WP_003022047.1">
    <property type="nucleotide sequence ID" value="NC_006570.2"/>
</dbReference>
<dbReference type="RefSeq" id="YP_170268.1">
    <property type="nucleotide sequence ID" value="NC_006570.2"/>
</dbReference>
<dbReference type="PDB" id="3LJK">
    <property type="method" value="X-ray"/>
    <property type="resolution" value="1.48 A"/>
    <property type="chains" value="A=1-540"/>
</dbReference>
<dbReference type="PDB" id="3M5P">
    <property type="method" value="X-ray"/>
    <property type="resolution" value="1.65 A"/>
    <property type="chains" value="A=1-540"/>
</dbReference>
<dbReference type="PDB" id="3Q7I">
    <property type="method" value="X-ray"/>
    <property type="resolution" value="1.54 A"/>
    <property type="chains" value="A=1-540"/>
</dbReference>
<dbReference type="PDB" id="3Q88">
    <property type="method" value="X-ray"/>
    <property type="resolution" value="1.70 A"/>
    <property type="chains" value="A=1-540"/>
</dbReference>
<dbReference type="PDBsum" id="3LJK"/>
<dbReference type="PDBsum" id="3M5P"/>
<dbReference type="PDBsum" id="3Q7I"/>
<dbReference type="PDBsum" id="3Q88"/>
<dbReference type="SMR" id="Q5NFC4"/>
<dbReference type="IntAct" id="Q5NFC4">
    <property type="interactions" value="2"/>
</dbReference>
<dbReference type="STRING" id="177416.FTT_1315c"/>
<dbReference type="EnsemblBacteria" id="CAG45948">
    <property type="protein sequence ID" value="CAG45948"/>
    <property type="gene ID" value="FTT_1315c"/>
</dbReference>
<dbReference type="KEGG" id="ftu:FTT_1315c"/>
<dbReference type="eggNOG" id="COG0166">
    <property type="taxonomic scope" value="Bacteria"/>
</dbReference>
<dbReference type="OrthoDB" id="140919at2"/>
<dbReference type="UniPathway" id="UPA00109">
    <property type="reaction ID" value="UER00181"/>
</dbReference>
<dbReference type="UniPathway" id="UPA00138"/>
<dbReference type="EvolutionaryTrace" id="Q5NFC4"/>
<dbReference type="Proteomes" id="UP000001174">
    <property type="component" value="Chromosome"/>
</dbReference>
<dbReference type="GO" id="GO:0005829">
    <property type="term" value="C:cytosol"/>
    <property type="evidence" value="ECO:0007669"/>
    <property type="project" value="TreeGrafter"/>
</dbReference>
<dbReference type="GO" id="GO:0097367">
    <property type="term" value="F:carbohydrate derivative binding"/>
    <property type="evidence" value="ECO:0007669"/>
    <property type="project" value="InterPro"/>
</dbReference>
<dbReference type="GO" id="GO:0004347">
    <property type="term" value="F:glucose-6-phosphate isomerase activity"/>
    <property type="evidence" value="ECO:0007669"/>
    <property type="project" value="UniProtKB-UniRule"/>
</dbReference>
<dbReference type="GO" id="GO:0048029">
    <property type="term" value="F:monosaccharide binding"/>
    <property type="evidence" value="ECO:0007669"/>
    <property type="project" value="TreeGrafter"/>
</dbReference>
<dbReference type="GO" id="GO:0006094">
    <property type="term" value="P:gluconeogenesis"/>
    <property type="evidence" value="ECO:0007669"/>
    <property type="project" value="UniProtKB-UniRule"/>
</dbReference>
<dbReference type="GO" id="GO:0051156">
    <property type="term" value="P:glucose 6-phosphate metabolic process"/>
    <property type="evidence" value="ECO:0007669"/>
    <property type="project" value="TreeGrafter"/>
</dbReference>
<dbReference type="GO" id="GO:0006096">
    <property type="term" value="P:glycolytic process"/>
    <property type="evidence" value="ECO:0007669"/>
    <property type="project" value="UniProtKB-UniRule"/>
</dbReference>
<dbReference type="CDD" id="cd05015">
    <property type="entry name" value="SIS_PGI_1"/>
    <property type="match status" value="1"/>
</dbReference>
<dbReference type="CDD" id="cd05016">
    <property type="entry name" value="SIS_PGI_2"/>
    <property type="match status" value="1"/>
</dbReference>
<dbReference type="Gene3D" id="1.10.1390.10">
    <property type="match status" value="1"/>
</dbReference>
<dbReference type="Gene3D" id="3.40.50.10490">
    <property type="entry name" value="Glucose-6-phosphate isomerase like protein, domain 1"/>
    <property type="match status" value="2"/>
</dbReference>
<dbReference type="HAMAP" id="MF_00473">
    <property type="entry name" value="G6P_isomerase"/>
    <property type="match status" value="1"/>
</dbReference>
<dbReference type="InterPro" id="IPR001672">
    <property type="entry name" value="G6P_Isomerase"/>
</dbReference>
<dbReference type="InterPro" id="IPR023096">
    <property type="entry name" value="G6P_Isomerase_C"/>
</dbReference>
<dbReference type="InterPro" id="IPR018189">
    <property type="entry name" value="Phosphoglucose_isomerase_CS"/>
</dbReference>
<dbReference type="InterPro" id="IPR046348">
    <property type="entry name" value="SIS_dom_sf"/>
</dbReference>
<dbReference type="InterPro" id="IPR035476">
    <property type="entry name" value="SIS_PGI_1"/>
</dbReference>
<dbReference type="InterPro" id="IPR035482">
    <property type="entry name" value="SIS_PGI_2"/>
</dbReference>
<dbReference type="NCBIfam" id="NF001211">
    <property type="entry name" value="PRK00179.1"/>
    <property type="match status" value="1"/>
</dbReference>
<dbReference type="PANTHER" id="PTHR11469">
    <property type="entry name" value="GLUCOSE-6-PHOSPHATE ISOMERASE"/>
    <property type="match status" value="1"/>
</dbReference>
<dbReference type="PANTHER" id="PTHR11469:SF1">
    <property type="entry name" value="GLUCOSE-6-PHOSPHATE ISOMERASE"/>
    <property type="match status" value="1"/>
</dbReference>
<dbReference type="Pfam" id="PF00342">
    <property type="entry name" value="PGI"/>
    <property type="match status" value="1"/>
</dbReference>
<dbReference type="PRINTS" id="PR00662">
    <property type="entry name" value="G6PISOMERASE"/>
</dbReference>
<dbReference type="SUPFAM" id="SSF53697">
    <property type="entry name" value="SIS domain"/>
    <property type="match status" value="1"/>
</dbReference>
<dbReference type="PROSITE" id="PS00765">
    <property type="entry name" value="P_GLUCOSE_ISOMERASE_1"/>
    <property type="match status" value="1"/>
</dbReference>
<dbReference type="PROSITE" id="PS00174">
    <property type="entry name" value="P_GLUCOSE_ISOMERASE_2"/>
    <property type="match status" value="1"/>
</dbReference>
<dbReference type="PROSITE" id="PS51463">
    <property type="entry name" value="P_GLUCOSE_ISOMERASE_3"/>
    <property type="match status" value="1"/>
</dbReference>
<organism>
    <name type="scientific">Francisella tularensis subsp. tularensis (strain SCHU S4 / Schu 4)</name>
    <dbReference type="NCBI Taxonomy" id="177416"/>
    <lineage>
        <taxon>Bacteria</taxon>
        <taxon>Pseudomonadati</taxon>
        <taxon>Pseudomonadota</taxon>
        <taxon>Gammaproteobacteria</taxon>
        <taxon>Thiotrichales</taxon>
        <taxon>Francisellaceae</taxon>
        <taxon>Francisella</taxon>
    </lineage>
</organism>
<protein>
    <recommendedName>
        <fullName evidence="1">Glucose-6-phosphate isomerase</fullName>
        <shortName evidence="1">GPI</shortName>
        <ecNumber evidence="1">5.3.1.9</ecNumber>
    </recommendedName>
    <alternativeName>
        <fullName evidence="1">Phosphoglucose isomerase</fullName>
        <shortName evidence="1">PGI</shortName>
    </alternativeName>
    <alternativeName>
        <fullName evidence="1">Phosphohexose isomerase</fullName>
        <shortName evidence="1">PHI</shortName>
    </alternativeName>
</protein>
<accession>Q5NFC4</accession>
<reference key="1">
    <citation type="journal article" date="2005" name="Nat. Genet.">
        <title>The complete genome sequence of Francisella tularensis, the causative agent of tularemia.</title>
        <authorList>
            <person name="Larsson P."/>
            <person name="Oyston P.C.F."/>
            <person name="Chain P."/>
            <person name="Chu M.C."/>
            <person name="Duffield M."/>
            <person name="Fuxelius H.-H."/>
            <person name="Garcia E."/>
            <person name="Haelltorp G."/>
            <person name="Johansson D."/>
            <person name="Isherwood K.E."/>
            <person name="Karp P.D."/>
            <person name="Larsson E."/>
            <person name="Liu Y."/>
            <person name="Michell S."/>
            <person name="Prior J."/>
            <person name="Prior R."/>
            <person name="Malfatti S."/>
            <person name="Sjoestedt A."/>
            <person name="Svensson K."/>
            <person name="Thompson N."/>
            <person name="Vergez L."/>
            <person name="Wagg J.K."/>
            <person name="Wren B.W."/>
            <person name="Lindler L.E."/>
            <person name="Andersson S.G.E."/>
            <person name="Forsman M."/>
            <person name="Titball R.W."/>
        </authorList>
    </citation>
    <scope>NUCLEOTIDE SEQUENCE [LARGE SCALE GENOMIC DNA]</scope>
    <source>
        <strain>SCHU S4 / Schu 4</strain>
    </source>
</reference>
<gene>
    <name evidence="1" type="primary">pgi</name>
    <name type="ordered locus">FTT_1315c</name>
</gene>
<feature type="chain" id="PRO_0000180644" description="Glucose-6-phosphate isomerase">
    <location>
        <begin position="1"/>
        <end position="540"/>
    </location>
</feature>
<feature type="active site" description="Proton donor" evidence="1">
    <location>
        <position position="346"/>
    </location>
</feature>
<feature type="active site" evidence="1">
    <location>
        <position position="377"/>
    </location>
</feature>
<feature type="active site" evidence="1">
    <location>
        <position position="505"/>
    </location>
</feature>
<feature type="strand" evidence="3">
    <location>
        <begin position="3"/>
        <end position="5"/>
    </location>
</feature>
<feature type="helix" evidence="2">
    <location>
        <begin position="6"/>
        <end position="12"/>
    </location>
</feature>
<feature type="helix" evidence="2">
    <location>
        <begin position="18"/>
        <end position="24"/>
    </location>
</feature>
<feature type="helix" evidence="2">
    <location>
        <begin position="28"/>
        <end position="31"/>
    </location>
</feature>
<feature type="strand" evidence="2">
    <location>
        <begin position="33"/>
        <end position="36"/>
    </location>
</feature>
<feature type="strand" evidence="2">
    <location>
        <begin position="39"/>
        <end position="42"/>
    </location>
</feature>
<feature type="helix" evidence="2">
    <location>
        <begin position="50"/>
        <end position="62"/>
    </location>
</feature>
<feature type="helix" evidence="2">
    <location>
        <begin position="65"/>
        <end position="74"/>
    </location>
</feature>
<feature type="turn" evidence="2">
    <location>
        <begin position="80"/>
        <end position="83"/>
    </location>
</feature>
<feature type="helix" evidence="2">
    <location>
        <begin position="88"/>
        <end position="92"/>
    </location>
</feature>
<feature type="helix" evidence="2">
    <location>
        <begin position="106"/>
        <end position="125"/>
    </location>
</feature>
<feature type="strand" evidence="2">
    <location>
        <begin position="139"/>
        <end position="143"/>
    </location>
</feature>
<feature type="helix" evidence="2">
    <location>
        <begin position="146"/>
        <end position="148"/>
    </location>
</feature>
<feature type="helix" evidence="2">
    <location>
        <begin position="150"/>
        <end position="158"/>
    </location>
</feature>
<feature type="helix" evidence="2">
    <location>
        <begin position="160"/>
        <end position="162"/>
    </location>
</feature>
<feature type="strand" evidence="2">
    <location>
        <begin position="168"/>
        <end position="172"/>
    </location>
</feature>
<feature type="strand" evidence="5">
    <location>
        <begin position="174"/>
        <end position="176"/>
    </location>
</feature>
<feature type="helix" evidence="2">
    <location>
        <begin position="177"/>
        <end position="184"/>
    </location>
</feature>
<feature type="helix" evidence="2">
    <location>
        <begin position="189"/>
        <end position="191"/>
    </location>
</feature>
<feature type="strand" evidence="2">
    <location>
        <begin position="192"/>
        <end position="197"/>
    </location>
</feature>
<feature type="strand" evidence="4">
    <location>
        <begin position="199"/>
        <end position="201"/>
    </location>
</feature>
<feature type="helix" evidence="2">
    <location>
        <begin position="204"/>
        <end position="221"/>
    </location>
</feature>
<feature type="helix" evidence="2">
    <location>
        <begin position="224"/>
        <end position="229"/>
    </location>
</feature>
<feature type="strand" evidence="2">
    <location>
        <begin position="231"/>
        <end position="234"/>
    </location>
</feature>
<feature type="helix" evidence="2">
    <location>
        <begin position="238"/>
        <end position="244"/>
    </location>
</feature>
<feature type="helix" evidence="2">
    <location>
        <begin position="248"/>
        <end position="250"/>
    </location>
</feature>
<feature type="strand" evidence="4">
    <location>
        <begin position="251"/>
        <end position="253"/>
    </location>
</feature>
<feature type="helix" evidence="2">
    <location>
        <begin position="260"/>
        <end position="262"/>
    </location>
</feature>
<feature type="helix" evidence="2">
    <location>
        <begin position="267"/>
        <end position="269"/>
    </location>
</feature>
<feature type="helix" evidence="2">
    <location>
        <begin position="270"/>
        <end position="276"/>
    </location>
</feature>
<feature type="helix" evidence="2">
    <location>
        <begin position="278"/>
        <end position="297"/>
    </location>
</feature>
<feature type="helix" evidence="2">
    <location>
        <begin position="300"/>
        <end position="302"/>
    </location>
</feature>
<feature type="helix" evidence="2">
    <location>
        <begin position="304"/>
        <end position="318"/>
    </location>
</feature>
<feature type="strand" evidence="2">
    <location>
        <begin position="323"/>
        <end position="328"/>
    </location>
</feature>
<feature type="helix" evidence="2">
    <location>
        <begin position="331"/>
        <end position="333"/>
    </location>
</feature>
<feature type="helix" evidence="2">
    <location>
        <begin position="336"/>
        <end position="348"/>
    </location>
</feature>
<feature type="strand" evidence="2">
    <location>
        <begin position="366"/>
        <end position="369"/>
    </location>
</feature>
<feature type="helix" evidence="2">
    <location>
        <begin position="374"/>
        <end position="377"/>
    </location>
</feature>
<feature type="helix" evidence="2">
    <location>
        <begin position="380"/>
        <end position="385"/>
    </location>
</feature>
<feature type="strand" evidence="2">
    <location>
        <begin position="392"/>
        <end position="399"/>
    </location>
</feature>
<feature type="strand" evidence="2">
    <location>
        <begin position="401"/>
        <end position="403"/>
    </location>
</feature>
<feature type="helix" evidence="2">
    <location>
        <begin position="405"/>
        <end position="424"/>
    </location>
</feature>
<feature type="helix" evidence="2">
    <location>
        <begin position="428"/>
        <end position="437"/>
    </location>
</feature>
<feature type="helix" evidence="2">
    <location>
        <begin position="442"/>
        <end position="452"/>
    </location>
</feature>
<feature type="strand" evidence="2">
    <location>
        <begin position="460"/>
        <end position="466"/>
    </location>
</feature>
<feature type="helix" evidence="2">
    <location>
        <begin position="470"/>
        <end position="491"/>
    </location>
</feature>
<feature type="helix" evidence="2">
    <location>
        <begin position="499"/>
        <end position="501"/>
    </location>
</feature>
<feature type="helix" evidence="2">
    <location>
        <begin position="502"/>
        <end position="516"/>
    </location>
</feature>
<feature type="helix" evidence="2">
    <location>
        <begin position="521"/>
        <end position="525"/>
    </location>
</feature>
<feature type="helix" evidence="2">
    <location>
        <begin position="528"/>
        <end position="538"/>
    </location>
</feature>
<comment type="function">
    <text evidence="1">Catalyzes the reversible isomerization of glucose-6-phosphate to fructose-6-phosphate.</text>
</comment>
<comment type="catalytic activity">
    <reaction evidence="1">
        <text>alpha-D-glucose 6-phosphate = beta-D-fructose 6-phosphate</text>
        <dbReference type="Rhea" id="RHEA:11816"/>
        <dbReference type="ChEBI" id="CHEBI:57634"/>
        <dbReference type="ChEBI" id="CHEBI:58225"/>
        <dbReference type="EC" id="5.3.1.9"/>
    </reaction>
</comment>
<comment type="pathway">
    <text evidence="1">Carbohydrate biosynthesis; gluconeogenesis.</text>
</comment>
<comment type="pathway">
    <text evidence="1">Carbohydrate degradation; glycolysis; D-glyceraldehyde 3-phosphate and glycerone phosphate from D-glucose: step 2/4.</text>
</comment>
<comment type="subcellular location">
    <subcellularLocation>
        <location evidence="1">Cytoplasm</location>
    </subcellularLocation>
</comment>
<comment type="similarity">
    <text evidence="1">Belongs to the GPI family.</text>
</comment>
<evidence type="ECO:0000255" key="1">
    <source>
        <dbReference type="HAMAP-Rule" id="MF_00473"/>
    </source>
</evidence>
<evidence type="ECO:0007829" key="2">
    <source>
        <dbReference type="PDB" id="3LJK"/>
    </source>
</evidence>
<evidence type="ECO:0007829" key="3">
    <source>
        <dbReference type="PDB" id="3M5P"/>
    </source>
</evidence>
<evidence type="ECO:0007829" key="4">
    <source>
        <dbReference type="PDB" id="3Q7I"/>
    </source>
</evidence>
<evidence type="ECO:0007829" key="5">
    <source>
        <dbReference type="PDB" id="3Q88"/>
    </source>
</evidence>
<name>G6PI_FRATT</name>
<keyword id="KW-0002">3D-structure</keyword>
<keyword id="KW-0963">Cytoplasm</keyword>
<keyword id="KW-0312">Gluconeogenesis</keyword>
<keyword id="KW-0324">Glycolysis</keyword>
<keyword id="KW-0413">Isomerase</keyword>
<keyword id="KW-1185">Reference proteome</keyword>
<proteinExistence type="evidence at protein level"/>